<accession>Q9C519</accession>
<accession>O04594</accession>
<accession>Q9C5T1</accession>
<evidence type="ECO:0000255" key="1">
    <source>
        <dbReference type="PROSITE-ProRule" id="PRU00223"/>
    </source>
</evidence>
<evidence type="ECO:0000256" key="2">
    <source>
        <dbReference type="SAM" id="MobiDB-lite"/>
    </source>
</evidence>
<evidence type="ECO:0000269" key="3">
    <source>
    </source>
</evidence>
<evidence type="ECO:0000269" key="4">
    <source>
    </source>
</evidence>
<evidence type="ECO:0000269" key="5">
    <source>
    </source>
</evidence>
<evidence type="ECO:0000269" key="6">
    <source>
    </source>
</evidence>
<evidence type="ECO:0000303" key="7">
    <source>
    </source>
</evidence>
<evidence type="ECO:0000305" key="8"/>
<evidence type="ECO:0000312" key="9">
    <source>
        <dbReference type="Araport" id="AT1G62300"/>
    </source>
</evidence>
<evidence type="ECO:0000312" key="10">
    <source>
        <dbReference type="EMBL" id="AAB60774.1"/>
    </source>
</evidence>
<dbReference type="EMBL" id="AF331713">
    <property type="protein sequence ID" value="AAK01128.1"/>
    <property type="molecule type" value="Genomic_DNA"/>
</dbReference>
<dbReference type="EMBL" id="AF331712">
    <property type="protein sequence ID" value="AAK01127.1"/>
    <property type="molecule type" value="mRNA"/>
</dbReference>
<dbReference type="EMBL" id="AC000375">
    <property type="protein sequence ID" value="AAB60774.1"/>
    <property type="status" value="ALT_SEQ"/>
    <property type="molecule type" value="Genomic_DNA"/>
</dbReference>
<dbReference type="EMBL" id="CP002684">
    <property type="protein sequence ID" value="AEE33948.1"/>
    <property type="molecule type" value="Genomic_DNA"/>
</dbReference>
<dbReference type="EMBL" id="AF224702">
    <property type="protein sequence ID" value="AAK28312.1"/>
    <property type="molecule type" value="mRNA"/>
</dbReference>
<dbReference type="PIR" id="F96649">
    <property type="entry name" value="F96649"/>
</dbReference>
<dbReference type="RefSeq" id="NP_564792.1">
    <property type="nucleotide sequence ID" value="NM_104910.3"/>
</dbReference>
<dbReference type="SMR" id="Q9C519"/>
<dbReference type="BioGRID" id="27748">
    <property type="interactions" value="13"/>
</dbReference>
<dbReference type="FunCoup" id="Q9C519">
    <property type="interactions" value="291"/>
</dbReference>
<dbReference type="IntAct" id="Q9C519">
    <property type="interactions" value="10"/>
</dbReference>
<dbReference type="STRING" id="3702.Q9C519"/>
<dbReference type="GlyGen" id="Q9C519">
    <property type="glycosylation" value="1 site"/>
</dbReference>
<dbReference type="iPTMnet" id="Q9C519"/>
<dbReference type="PaxDb" id="3702-AT1G62300.1"/>
<dbReference type="ProteomicsDB" id="246420"/>
<dbReference type="EnsemblPlants" id="AT1G62300.1">
    <property type="protein sequence ID" value="AT1G62300.1"/>
    <property type="gene ID" value="AT1G62300"/>
</dbReference>
<dbReference type="GeneID" id="842527"/>
<dbReference type="Gramene" id="AT1G62300.1">
    <property type="protein sequence ID" value="AT1G62300.1"/>
    <property type="gene ID" value="AT1G62300"/>
</dbReference>
<dbReference type="KEGG" id="ath:AT1G62300"/>
<dbReference type="Araport" id="AT1G62300"/>
<dbReference type="TAIR" id="AT1G62300">
    <property type="gene designation" value="WRKY6"/>
</dbReference>
<dbReference type="eggNOG" id="ENOG502QSY8">
    <property type="taxonomic scope" value="Eukaryota"/>
</dbReference>
<dbReference type="HOGENOM" id="CLU_021824_3_1_1"/>
<dbReference type="InParanoid" id="Q9C519"/>
<dbReference type="OMA" id="NHNSLMQ"/>
<dbReference type="OrthoDB" id="2020995at2759"/>
<dbReference type="PhylomeDB" id="Q9C519"/>
<dbReference type="PRO" id="PR:Q9C519"/>
<dbReference type="Proteomes" id="UP000006548">
    <property type="component" value="Chromosome 1"/>
</dbReference>
<dbReference type="ExpressionAtlas" id="Q9C519">
    <property type="expression patterns" value="baseline and differential"/>
</dbReference>
<dbReference type="GO" id="GO:0005634">
    <property type="term" value="C:nucleus"/>
    <property type="evidence" value="ECO:0007669"/>
    <property type="project" value="UniProtKB-SubCell"/>
</dbReference>
<dbReference type="GO" id="GO:0003700">
    <property type="term" value="F:DNA-binding transcription factor activity"/>
    <property type="evidence" value="ECO:0000315"/>
    <property type="project" value="TAIR"/>
</dbReference>
<dbReference type="GO" id="GO:0000976">
    <property type="term" value="F:transcription cis-regulatory region binding"/>
    <property type="evidence" value="ECO:0000314"/>
    <property type="project" value="TAIR"/>
</dbReference>
<dbReference type="GO" id="GO:0080169">
    <property type="term" value="P:cellular response to boron-containing substance deprivation"/>
    <property type="evidence" value="ECO:0000315"/>
    <property type="project" value="TAIR"/>
</dbReference>
<dbReference type="GO" id="GO:0016036">
    <property type="term" value="P:cellular response to phosphate starvation"/>
    <property type="evidence" value="ECO:0000315"/>
    <property type="project" value="TAIR"/>
</dbReference>
<dbReference type="GO" id="GO:0009873">
    <property type="term" value="P:ethylene-activated signaling pathway"/>
    <property type="evidence" value="ECO:0007669"/>
    <property type="project" value="UniProtKB-KW"/>
</dbReference>
<dbReference type="GO" id="GO:0045892">
    <property type="term" value="P:negative regulation of DNA-templated transcription"/>
    <property type="evidence" value="ECO:0000315"/>
    <property type="project" value="TAIR"/>
</dbReference>
<dbReference type="FunFam" id="2.20.25.80:FF:000002">
    <property type="entry name" value="probable WRKY transcription factor 31"/>
    <property type="match status" value="1"/>
</dbReference>
<dbReference type="Gene3D" id="2.20.25.80">
    <property type="entry name" value="WRKY domain"/>
    <property type="match status" value="1"/>
</dbReference>
<dbReference type="InterPro" id="IPR003657">
    <property type="entry name" value="WRKY_dom"/>
</dbReference>
<dbReference type="InterPro" id="IPR036576">
    <property type="entry name" value="WRKY_dom_sf"/>
</dbReference>
<dbReference type="InterPro" id="IPR044810">
    <property type="entry name" value="WRKY_plant"/>
</dbReference>
<dbReference type="PANTHER" id="PTHR31429">
    <property type="entry name" value="WRKY TRANSCRIPTION FACTOR 36-RELATED"/>
    <property type="match status" value="1"/>
</dbReference>
<dbReference type="PANTHER" id="PTHR31429:SF77">
    <property type="entry name" value="WRKY TRANSCRIPTION FACTOR 6"/>
    <property type="match status" value="1"/>
</dbReference>
<dbReference type="Pfam" id="PF03106">
    <property type="entry name" value="WRKY"/>
    <property type="match status" value="1"/>
</dbReference>
<dbReference type="SMART" id="SM00774">
    <property type="entry name" value="WRKY"/>
    <property type="match status" value="1"/>
</dbReference>
<dbReference type="SUPFAM" id="SSF118290">
    <property type="entry name" value="WRKY DNA-binding domain"/>
    <property type="match status" value="1"/>
</dbReference>
<dbReference type="PROSITE" id="PS50811">
    <property type="entry name" value="WRKY"/>
    <property type="match status" value="1"/>
</dbReference>
<name>WRKY6_ARATH</name>
<proteinExistence type="evidence at protein level"/>
<reference key="1">
    <citation type="journal article" date="2001" name="Plant J.">
        <title>A new member of the Arabidopsis WRKY transcription factor family, AtWRKY6, is associated with both senescence- and defence-related processes.</title>
        <authorList>
            <person name="Robatzek S."/>
            <person name="Somssich I.E."/>
        </authorList>
    </citation>
    <scope>NUCLEOTIDE SEQUENCE [GENOMIC DNA / MRNA]</scope>
    <scope>INDUCTION</scope>
    <scope>SUBCELLULAR LOCATION</scope>
    <scope>MUTAGENESIS OF LYS-278 AND 296-ARG-LYS-297</scope>
</reference>
<reference key="2">
    <citation type="journal article" date="2000" name="Nature">
        <title>Sequence and analysis of chromosome 1 of the plant Arabidopsis thaliana.</title>
        <authorList>
            <person name="Theologis A."/>
            <person name="Ecker J.R."/>
            <person name="Palm C.J."/>
            <person name="Federspiel N.A."/>
            <person name="Kaul S."/>
            <person name="White O."/>
            <person name="Alonso J."/>
            <person name="Altafi H."/>
            <person name="Araujo R."/>
            <person name="Bowman C.L."/>
            <person name="Brooks S.Y."/>
            <person name="Buehler E."/>
            <person name="Chan A."/>
            <person name="Chao Q."/>
            <person name="Chen H."/>
            <person name="Cheuk R.F."/>
            <person name="Chin C.W."/>
            <person name="Chung M.K."/>
            <person name="Conn L."/>
            <person name="Conway A.B."/>
            <person name="Conway A.R."/>
            <person name="Creasy T.H."/>
            <person name="Dewar K."/>
            <person name="Dunn P."/>
            <person name="Etgu P."/>
            <person name="Feldblyum T.V."/>
            <person name="Feng J.-D."/>
            <person name="Fong B."/>
            <person name="Fujii C.Y."/>
            <person name="Gill J.E."/>
            <person name="Goldsmith A.D."/>
            <person name="Haas B."/>
            <person name="Hansen N.F."/>
            <person name="Hughes B."/>
            <person name="Huizar L."/>
            <person name="Hunter J.L."/>
            <person name="Jenkins J."/>
            <person name="Johnson-Hopson C."/>
            <person name="Khan S."/>
            <person name="Khaykin E."/>
            <person name="Kim C.J."/>
            <person name="Koo H.L."/>
            <person name="Kremenetskaia I."/>
            <person name="Kurtz D.B."/>
            <person name="Kwan A."/>
            <person name="Lam B."/>
            <person name="Langin-Hooper S."/>
            <person name="Lee A."/>
            <person name="Lee J.M."/>
            <person name="Lenz C.A."/>
            <person name="Li J.H."/>
            <person name="Li Y.-P."/>
            <person name="Lin X."/>
            <person name="Liu S.X."/>
            <person name="Liu Z.A."/>
            <person name="Luros J.S."/>
            <person name="Maiti R."/>
            <person name="Marziali A."/>
            <person name="Militscher J."/>
            <person name="Miranda M."/>
            <person name="Nguyen M."/>
            <person name="Nierman W.C."/>
            <person name="Osborne B.I."/>
            <person name="Pai G."/>
            <person name="Peterson J."/>
            <person name="Pham P.K."/>
            <person name="Rizzo M."/>
            <person name="Rooney T."/>
            <person name="Rowley D."/>
            <person name="Sakano H."/>
            <person name="Salzberg S.L."/>
            <person name="Schwartz J.R."/>
            <person name="Shinn P."/>
            <person name="Southwick A.M."/>
            <person name="Sun H."/>
            <person name="Tallon L.J."/>
            <person name="Tambunga G."/>
            <person name="Toriumi M.J."/>
            <person name="Town C.D."/>
            <person name="Utterback T."/>
            <person name="Van Aken S."/>
            <person name="Vaysberg M."/>
            <person name="Vysotskaia V.S."/>
            <person name="Walker M."/>
            <person name="Wu D."/>
            <person name="Yu G."/>
            <person name="Fraser C.M."/>
            <person name="Venter J.C."/>
            <person name="Davis R.W."/>
        </authorList>
    </citation>
    <scope>NUCLEOTIDE SEQUENCE [LARGE SCALE GENOMIC DNA]</scope>
    <source>
        <strain>cv. Columbia</strain>
    </source>
</reference>
<reference key="3">
    <citation type="journal article" date="2017" name="Plant J.">
        <title>Araport11: a complete reannotation of the Arabidopsis thaliana reference genome.</title>
        <authorList>
            <person name="Cheng C.Y."/>
            <person name="Krishnakumar V."/>
            <person name="Chan A.P."/>
            <person name="Thibaud-Nissen F."/>
            <person name="Schobel S."/>
            <person name="Town C.D."/>
        </authorList>
    </citation>
    <scope>GENOME REANNOTATION</scope>
    <source>
        <strain>cv. Columbia</strain>
    </source>
</reference>
<reference key="4">
    <citation type="journal article" date="2001" name="Plant Cell">
        <title>Evidence for an important role of WRKY DNA binding proteins in the regulation of NPR1 gene expression.</title>
        <authorList>
            <person name="Yu D."/>
            <person name="Chen C."/>
            <person name="Chen Z."/>
        </authorList>
    </citation>
    <scope>NUCLEOTIDE SEQUENCE [MRNA] OF 316-553</scope>
    <scope>INDUCTION</scope>
</reference>
<reference key="5">
    <citation type="journal article" date="2002" name="Genes Dev.">
        <title>Targets of AtWRKY6 regulation during plant senescence and pathogen defense.</title>
        <authorList>
            <person name="Robatzek S."/>
            <person name="Somssich I.E."/>
        </authorList>
    </citation>
    <scope>FUNCTION</scope>
</reference>
<reference key="6">
    <citation type="journal article" date="2015" name="Plant Physiol.">
        <title>WRKY42 modulates phosphate homeostasis through regulating phosphate translocation and acquisition in Arabidopsis.</title>
        <authorList>
            <person name="Su T."/>
            <person name="Xu Q."/>
            <person name="Zhang F.C."/>
            <person name="Chen Y."/>
            <person name="Li L.Q."/>
            <person name="Wu W.H."/>
            <person name="Chen Y.F."/>
        </authorList>
    </citation>
    <scope>FUNCTION</scope>
</reference>
<organism>
    <name type="scientific">Arabidopsis thaliana</name>
    <name type="common">Mouse-ear cress</name>
    <dbReference type="NCBI Taxonomy" id="3702"/>
    <lineage>
        <taxon>Eukaryota</taxon>
        <taxon>Viridiplantae</taxon>
        <taxon>Streptophyta</taxon>
        <taxon>Embryophyta</taxon>
        <taxon>Tracheophyta</taxon>
        <taxon>Spermatophyta</taxon>
        <taxon>Magnoliopsida</taxon>
        <taxon>eudicotyledons</taxon>
        <taxon>Gunneridae</taxon>
        <taxon>Pentapetalae</taxon>
        <taxon>rosids</taxon>
        <taxon>malvids</taxon>
        <taxon>Brassicales</taxon>
        <taxon>Brassicaceae</taxon>
        <taxon>Camelineae</taxon>
        <taxon>Arabidopsis</taxon>
    </lineage>
</organism>
<gene>
    <name evidence="7" type="primary">WRKY6</name>
    <name evidence="9" type="ordered locus">At1g62300</name>
    <name evidence="10" type="ORF">F19K23.22</name>
</gene>
<keyword id="KW-0010">Activator</keyword>
<keyword id="KW-0238">DNA-binding</keyword>
<keyword id="KW-0936">Ethylene signaling pathway</keyword>
<keyword id="KW-0539">Nucleus</keyword>
<keyword id="KW-1185">Reference proteome</keyword>
<keyword id="KW-0678">Repressor</keyword>
<keyword id="KW-0804">Transcription</keyword>
<keyword id="KW-0805">Transcription regulation</keyword>
<sequence length="553" mass="60593">MDRGWSGLTLDSSSLDLLNPNRISHKNHRRFSNPLAMSRIDEEDDQKTRISTNGSEFRFPVSLSGIRDREDEDFSSGVAGDNDREVPGEVDFFSDKKSRVCREDDEGFRVKKEEQDDRTDVNTGLNLRTTGNTKSDESMIDDGESSEMEDKRAKNELVKLQDELKKMTMDNQKLRELLTQVSNSYTSLQMHLVSLMQQQQQQNNKVIEAAEKPEETIVPRQFIDLGPTRAVGEAEDVSNSSSEDRTRSGGSSAAERRSNGKRLGREESPETESNKIQKVNSTTPTTFDQTAEATMRKARVSVRARSEAPMISDGCQWRKYGQKMAKGNPCPRAYYRCTMATGCPVRKQVQRCAEDRSILITTYEGNHNHPLPPAAVAMASTTTAAANMLLSGSMSSHDGMMNPTNLLARAVLPCSTSMATISASAPFPTVTLDLTHSPPPPNGSNPSSSAATNNNHNSLMQRPQQQQQQMTNLPPGMLPHVIGQALYNQSKFSGLQFSGGSPSTAAFSQSHAVADTITALTADPNFTAALAAVISSMINGTNHHDGEGNNKNQ</sequence>
<comment type="function">
    <text evidence="5 6">Transcription factor involved in the control of processes related to senescence and pathogen defense (PubMed:12000796). Interacts specifically with the W box (5'-(T)TGAC[CT]-3'), a frequently occurring elicitor-responsive cis-acting element (PubMed:12000796). Activates the transcription of the SIRK gene and represses its own expression and that of the WRKY42 genes (PubMed:12000796). Modulates phosphate homeostasis and Pi translocation by regulating PHO1 expression (PubMed:25733771).</text>
</comment>
<comment type="subcellular location">
    <subcellularLocation>
        <location evidence="1 4">Nucleus</location>
    </subcellularLocation>
</comment>
<comment type="tissue specificity">
    <text>Roots, leaves, shoots, flowers and siliques.</text>
</comment>
<comment type="induction">
    <text evidence="3 4">By salicylic acid, ethylene, jasmonic acid, pathogens, wounding and strongly during leaf senescence.</text>
</comment>
<comment type="similarity">
    <text evidence="8">Belongs to the WRKY group II-b family.</text>
</comment>
<comment type="sequence caution" evidence="8">
    <conflict type="erroneous gene model prediction">
        <sequence resource="EMBL-CDS" id="AAB60774"/>
    </conflict>
</comment>
<protein>
    <recommendedName>
        <fullName evidence="7">WRKY transcription factor 6</fullName>
    </recommendedName>
    <alternativeName>
        <fullName evidence="7">WRKY DNA-binding protein 6</fullName>
        <shortName evidence="7">AtWRKY6</shortName>
    </alternativeName>
</protein>
<feature type="chain" id="PRO_0000133648" description="WRKY transcription factor 6">
    <location>
        <begin position="1"/>
        <end position="553"/>
    </location>
</feature>
<feature type="DNA-binding region" description="WRKY" evidence="1">
    <location>
        <begin position="306"/>
        <end position="372"/>
    </location>
</feature>
<feature type="region of interest" description="Disordered" evidence="2">
    <location>
        <begin position="111"/>
        <end position="152"/>
    </location>
</feature>
<feature type="region of interest" description="Disordered" evidence="2">
    <location>
        <begin position="221"/>
        <end position="292"/>
    </location>
</feature>
<feature type="region of interest" description="Disordered" evidence="2">
    <location>
        <begin position="431"/>
        <end position="477"/>
    </location>
</feature>
<feature type="compositionally biased region" description="Basic and acidic residues" evidence="2">
    <location>
        <begin position="111"/>
        <end position="120"/>
    </location>
</feature>
<feature type="compositionally biased region" description="Low complexity" evidence="2">
    <location>
        <begin position="122"/>
        <end position="133"/>
    </location>
</feature>
<feature type="compositionally biased region" description="Acidic residues" evidence="2">
    <location>
        <begin position="138"/>
        <end position="147"/>
    </location>
</feature>
<feature type="compositionally biased region" description="Basic and acidic residues" evidence="2">
    <location>
        <begin position="254"/>
        <end position="275"/>
    </location>
</feature>
<feature type="compositionally biased region" description="Polar residues" evidence="2">
    <location>
        <begin position="276"/>
        <end position="292"/>
    </location>
</feature>
<feature type="compositionally biased region" description="Low complexity" evidence="2">
    <location>
        <begin position="444"/>
        <end position="469"/>
    </location>
</feature>
<feature type="mutagenesis site" description="Abolishes nuclear localization." evidence="4">
    <original>K</original>
    <variation>E</variation>
    <location>
        <position position="278"/>
    </location>
</feature>
<feature type="mutagenesis site" description="No effect on nuclear localization." evidence="4">
    <original>RK</original>
    <variation>AA</variation>
    <location>
        <begin position="296"/>
        <end position="297"/>
    </location>
</feature>